<feature type="signal peptide" evidence="3">
    <location>
        <begin position="1"/>
        <end position="19"/>
    </location>
</feature>
<feature type="propeptide" id="PRO_0000033884" evidence="3">
    <location>
        <begin position="20"/>
        <end position="260"/>
    </location>
</feature>
<feature type="chain" id="PRO_0000033885" description="Bone morphogenetic protein 8A">
    <location>
        <begin position="261"/>
        <end position="399"/>
    </location>
</feature>
<feature type="region of interest" description="Disordered" evidence="4">
    <location>
        <begin position="257"/>
        <end position="286"/>
    </location>
</feature>
<feature type="glycosylation site" description="N-linked (GlcNAc...) asparagine" evidence="3">
    <location>
        <position position="155"/>
    </location>
</feature>
<feature type="glycosylation site" description="N-linked (GlcNAc...) asparagine" evidence="3">
    <location>
        <position position="340"/>
    </location>
</feature>
<feature type="disulfide bond" evidence="1">
    <location>
        <begin position="298"/>
        <end position="364"/>
    </location>
</feature>
<feature type="disulfide bond" evidence="1">
    <location>
        <begin position="327"/>
        <end position="396"/>
    </location>
</feature>
<feature type="disulfide bond" evidence="1">
    <location>
        <begin position="331"/>
        <end position="398"/>
    </location>
</feature>
<feature type="disulfide bond" description="Interchain" evidence="1">
    <location>
        <position position="363"/>
    </location>
</feature>
<feature type="splice variant" id="VSP_046527" description="In isoform 2." evidence="10">
    <original>V</original>
    <variation>VSTTVACCDRWSGV</variation>
    <location>
        <position position="351"/>
    </location>
</feature>
<name>BMP8A_MOUSE</name>
<sequence>MAMRPGPLWLLGLALCALGGGHGPRPPHTCPQRRLGARERRDMQREILAVLGLPGRPRPRAQPAAARQPASAPLFMLDLYHAMTDDDDGGPPQAHLGRADLVMSFVNMVERDRTLGYQEPHWKEFHFDLTQIPAGEAVTAAEFRIYKEPSTHPLNTTLHISMFEVVQEHSNRESDLFFLDLQTLRSGDEGWLVLDITAASDRWLLNHHKDLGLRLYVETADGHSMDPGLAGLLGRQAPRSRQPFMVTFFRASQSPVRAPRAARPLKRRQPKKTNELPHPNKLPGIFDDGHGSRGREVCRRHELYVSFRDLGWLDWVIAPQGYSAYYCEGECAFPLDSCMNATNHAILQSLVHLMKPDVVPKACCAPTKLSATSVLYYDSSNNVILRKHRNMVVKACGCH</sequence>
<accession>P34821</accession>
<organism>
    <name type="scientific">Mus musculus</name>
    <name type="common">Mouse</name>
    <dbReference type="NCBI Taxonomy" id="10090"/>
    <lineage>
        <taxon>Eukaryota</taxon>
        <taxon>Metazoa</taxon>
        <taxon>Chordata</taxon>
        <taxon>Craniata</taxon>
        <taxon>Vertebrata</taxon>
        <taxon>Euteleostomi</taxon>
        <taxon>Mammalia</taxon>
        <taxon>Eutheria</taxon>
        <taxon>Euarchontoglires</taxon>
        <taxon>Glires</taxon>
        <taxon>Rodentia</taxon>
        <taxon>Myomorpha</taxon>
        <taxon>Muroidea</taxon>
        <taxon>Muridae</taxon>
        <taxon>Murinae</taxon>
        <taxon>Mus</taxon>
        <taxon>Mus</taxon>
    </lineage>
</organism>
<proteinExistence type="evidence at transcript level"/>
<gene>
    <name type="primary">Bmp8a</name>
    <name type="synonym">Bmp-8</name>
    <name type="synonym">Bmp8</name>
</gene>
<comment type="function">
    <text evidence="2 5 7 9">Growth factor of the TGF-beta superfamily that plays important role in various biological processes, including spermatogenesis, osteogenesis, steroidogenesis as well as regulation of energy balance (PubMed:12925636, PubMed:28465413, PubMed:9463357). Initiates the canonical BMP signaling cascade by associating with type I receptor BMPR1A and type II receptor BMPR2. Once all three components are bound together in a complex at the cell surface, BMPR2 phosphorylates and activates BMPR1A (By similarity). In turn, BMPR1A propagates signal by phosphorylating SMAD1/5/8 that travel to the nucleus and act as activators and repressors of transcription of target genes. In addition, activates the SMAD2/3 pathway (PubMed:28465413).</text>
</comment>
<comment type="subunit">
    <text evidence="1">Homodimer; disulfide-linked.</text>
</comment>
<comment type="subcellular location">
    <subcellularLocation>
        <location evidence="11">Secreted</location>
    </subcellularLocation>
</comment>
<comment type="alternative products">
    <event type="alternative splicing"/>
    <isoform>
        <id>P34821-1</id>
        <name>1</name>
        <sequence type="displayed"/>
    </isoform>
    <isoform>
        <id>P34821-2</id>
        <name>2</name>
        <sequence type="described" ref="VSP_046527"/>
    </isoform>
</comment>
<comment type="tissue specificity">
    <text evidence="7 8">Expressed in testis. expressed in trophoblast cells of the labyrinthine region of the placenta and in the inner root sheath of hair follicles of early postnatal skin (PubMed:8843393). Expressed predominantly in the neonatal mouse spermatogonia (PubMed:28465413).</text>
</comment>
<comment type="developmental stage">
    <text evidence="8">Extensive expression found in 8-day embryos, fell drastically in 10-day embryos and virtually absent in 17-day embryos. Expressed during specific stages of spermatogenesis, with the highest levels in stage 6-8 round spermatids after 3 weeks of age.</text>
</comment>
<comment type="induction">
    <text evidence="6">By dexamethasone in calvarial osteoblasts.</text>
</comment>
<comment type="disruption phenotype">
    <text evidence="9">Deletion mutant mice show normal embryonic and postnatal development. Homozygous mutant females have normal fertility. Males do not show germ cell defects during the initiation of spermatogenesis. However, germ cell degeneration is observed in about half of adult males.</text>
</comment>
<comment type="similarity">
    <text evidence="11">Belongs to the TGF-beta family.</text>
</comment>
<evidence type="ECO:0000250" key="1"/>
<evidence type="ECO:0000250" key="2">
    <source>
        <dbReference type="UniProtKB" id="Q7Z5Y6"/>
    </source>
</evidence>
<evidence type="ECO:0000255" key="3"/>
<evidence type="ECO:0000256" key="4">
    <source>
        <dbReference type="SAM" id="MobiDB-lite"/>
    </source>
</evidence>
<evidence type="ECO:0000269" key="5">
    <source>
    </source>
</evidence>
<evidence type="ECO:0000269" key="6">
    <source>
    </source>
</evidence>
<evidence type="ECO:0000269" key="7">
    <source>
    </source>
</evidence>
<evidence type="ECO:0000269" key="8">
    <source>
    </source>
</evidence>
<evidence type="ECO:0000269" key="9">
    <source>
    </source>
</evidence>
<evidence type="ECO:0000303" key="10">
    <source>
    </source>
</evidence>
<evidence type="ECO:0000305" key="11"/>
<protein>
    <recommendedName>
        <fullName>Bone morphogenetic protein 8A</fullName>
        <shortName>BMP-8A</shortName>
    </recommendedName>
    <alternativeName>
        <fullName>Osteogenic protein 2</fullName>
        <shortName>OP-2</shortName>
    </alternativeName>
</protein>
<keyword id="KW-0025">Alternative splicing</keyword>
<keyword id="KW-0891">Chondrogenesis</keyword>
<keyword id="KW-0202">Cytokine</keyword>
<keyword id="KW-0217">Developmental protein</keyword>
<keyword id="KW-0221">Differentiation</keyword>
<keyword id="KW-1015">Disulfide bond</keyword>
<keyword id="KW-0325">Glycoprotein</keyword>
<keyword id="KW-0339">Growth factor</keyword>
<keyword id="KW-0892">Osteogenesis</keyword>
<keyword id="KW-1185">Reference proteome</keyword>
<keyword id="KW-0964">Secreted</keyword>
<keyword id="KW-0732">Signal</keyword>
<dbReference type="EMBL" id="M97017">
    <property type="protein sequence ID" value="AAB01365.1"/>
    <property type="molecule type" value="mRNA"/>
</dbReference>
<dbReference type="CCDS" id="CCDS18616.1">
    <molecule id="P34821-1"/>
</dbReference>
<dbReference type="CCDS" id="CCDS57293.1">
    <molecule id="P34821-2"/>
</dbReference>
<dbReference type="RefSeq" id="NP_001242948.1">
    <molecule id="P34821-2"/>
    <property type="nucleotide sequence ID" value="NM_001256019.1"/>
</dbReference>
<dbReference type="RefSeq" id="NP_031584.1">
    <molecule id="P34821-1"/>
    <property type="nucleotide sequence ID" value="NM_007558.3"/>
</dbReference>
<dbReference type="SMR" id="P34821"/>
<dbReference type="BioGRID" id="198368">
    <property type="interactions" value="1"/>
</dbReference>
<dbReference type="FunCoup" id="P34821">
    <property type="interactions" value="683"/>
</dbReference>
<dbReference type="STRING" id="10090.ENSMUSP00000037779"/>
<dbReference type="GlyCosmos" id="P34821">
    <property type="glycosylation" value="2 sites, No reported glycans"/>
</dbReference>
<dbReference type="GlyGen" id="P34821">
    <property type="glycosylation" value="2 sites"/>
</dbReference>
<dbReference type="PhosphoSitePlus" id="P34821"/>
<dbReference type="jPOST" id="P34821"/>
<dbReference type="PaxDb" id="10090-ENSMUSP00000037779"/>
<dbReference type="ProteomicsDB" id="273503">
    <molecule id="P34821-1"/>
</dbReference>
<dbReference type="ProteomicsDB" id="273504">
    <molecule id="P34821-2"/>
</dbReference>
<dbReference type="DNASU" id="12163"/>
<dbReference type="Ensembl" id="ENSMUST00000040496.6">
    <molecule id="P34821-2"/>
    <property type="protein sequence ID" value="ENSMUSP00000037779.6"/>
    <property type="gene ID" value="ENSMUSG00000032726.13"/>
</dbReference>
<dbReference type="Ensembl" id="ENSMUST00000102641.10">
    <molecule id="P34821-1"/>
    <property type="protein sequence ID" value="ENSMUSP00000099701.4"/>
    <property type="gene ID" value="ENSMUSG00000032726.13"/>
</dbReference>
<dbReference type="GeneID" id="12163"/>
<dbReference type="KEGG" id="mmu:12163"/>
<dbReference type="UCSC" id="uc008upg.2">
    <molecule id="P34821-1"/>
    <property type="organism name" value="mouse"/>
</dbReference>
<dbReference type="AGR" id="MGI:104515"/>
<dbReference type="CTD" id="353500"/>
<dbReference type="MGI" id="MGI:104515">
    <property type="gene designation" value="Bmp8a"/>
</dbReference>
<dbReference type="VEuPathDB" id="HostDB:ENSMUSG00000032726"/>
<dbReference type="eggNOG" id="KOG3900">
    <property type="taxonomic scope" value="Eukaryota"/>
</dbReference>
<dbReference type="GeneTree" id="ENSGT00940000164770"/>
<dbReference type="HOGENOM" id="CLU_020515_4_1_1"/>
<dbReference type="InParanoid" id="P34821"/>
<dbReference type="OMA" id="DRDIFHQ"/>
<dbReference type="OrthoDB" id="5987191at2759"/>
<dbReference type="PhylomeDB" id="P34821"/>
<dbReference type="BioGRID-ORCS" id="12163">
    <property type="hits" value="2 hits in 78 CRISPR screens"/>
</dbReference>
<dbReference type="PRO" id="PR:P34821"/>
<dbReference type="Proteomes" id="UP000000589">
    <property type="component" value="Chromosome 4"/>
</dbReference>
<dbReference type="RNAct" id="P34821">
    <property type="molecule type" value="protein"/>
</dbReference>
<dbReference type="Bgee" id="ENSMUSG00000032726">
    <property type="expression patterns" value="Expressed in decidua and 57 other cell types or tissues"/>
</dbReference>
<dbReference type="ExpressionAtlas" id="P34821">
    <property type="expression patterns" value="baseline and differential"/>
</dbReference>
<dbReference type="GO" id="GO:0005615">
    <property type="term" value="C:extracellular space"/>
    <property type="evidence" value="ECO:0007669"/>
    <property type="project" value="UniProtKB-KW"/>
</dbReference>
<dbReference type="GO" id="GO:0005125">
    <property type="term" value="F:cytokine activity"/>
    <property type="evidence" value="ECO:0000304"/>
    <property type="project" value="MGI"/>
</dbReference>
<dbReference type="GO" id="GO:0008083">
    <property type="term" value="F:growth factor activity"/>
    <property type="evidence" value="ECO:0007669"/>
    <property type="project" value="UniProtKB-KW"/>
</dbReference>
<dbReference type="GO" id="GO:0051216">
    <property type="term" value="P:cartilage development"/>
    <property type="evidence" value="ECO:0007669"/>
    <property type="project" value="UniProtKB-KW"/>
</dbReference>
<dbReference type="GO" id="GO:0007281">
    <property type="term" value="P:germ cell development"/>
    <property type="evidence" value="ECO:0000315"/>
    <property type="project" value="MGI"/>
</dbReference>
<dbReference type="GO" id="GO:0001649">
    <property type="term" value="P:osteoblast differentiation"/>
    <property type="evidence" value="ECO:0000314"/>
    <property type="project" value="UniProtKB"/>
</dbReference>
<dbReference type="GO" id="GO:0007283">
    <property type="term" value="P:spermatogenesis"/>
    <property type="evidence" value="ECO:0000315"/>
    <property type="project" value="MGI"/>
</dbReference>
<dbReference type="GO" id="GO:0007179">
    <property type="term" value="P:transforming growth factor beta receptor signaling pathway"/>
    <property type="evidence" value="ECO:0000304"/>
    <property type="project" value="MGI"/>
</dbReference>
<dbReference type="CDD" id="cd19398">
    <property type="entry name" value="TGF_beta_BMP8"/>
    <property type="match status" value="1"/>
</dbReference>
<dbReference type="FunFam" id="2.60.120.970:FF:000017">
    <property type="entry name" value="Bone morphogenetic protein 8a"/>
    <property type="match status" value="1"/>
</dbReference>
<dbReference type="FunFam" id="2.10.90.10:FF:000020">
    <property type="entry name" value="bone morphogenetic protein 8B"/>
    <property type="match status" value="1"/>
</dbReference>
<dbReference type="Gene3D" id="2.60.120.970">
    <property type="match status" value="1"/>
</dbReference>
<dbReference type="Gene3D" id="2.10.90.10">
    <property type="entry name" value="Cystine-knot cytokines"/>
    <property type="match status" value="1"/>
</dbReference>
<dbReference type="InterPro" id="IPR029034">
    <property type="entry name" value="Cystine-knot_cytokine"/>
</dbReference>
<dbReference type="InterPro" id="IPR001839">
    <property type="entry name" value="TGF-b_C"/>
</dbReference>
<dbReference type="InterPro" id="IPR001111">
    <property type="entry name" value="TGF-b_propeptide"/>
</dbReference>
<dbReference type="InterPro" id="IPR015615">
    <property type="entry name" value="TGF-beta-rel"/>
</dbReference>
<dbReference type="InterPro" id="IPR017948">
    <property type="entry name" value="TGFb_CS"/>
</dbReference>
<dbReference type="PANTHER" id="PTHR11848:SF296">
    <property type="entry name" value="BONE MORPHOGENETIC PROTEIN 8A"/>
    <property type="match status" value="1"/>
</dbReference>
<dbReference type="PANTHER" id="PTHR11848">
    <property type="entry name" value="TGF-BETA FAMILY"/>
    <property type="match status" value="1"/>
</dbReference>
<dbReference type="Pfam" id="PF00019">
    <property type="entry name" value="TGF_beta"/>
    <property type="match status" value="1"/>
</dbReference>
<dbReference type="Pfam" id="PF00688">
    <property type="entry name" value="TGFb_propeptide"/>
    <property type="match status" value="1"/>
</dbReference>
<dbReference type="SMART" id="SM00204">
    <property type="entry name" value="TGFB"/>
    <property type="match status" value="1"/>
</dbReference>
<dbReference type="SUPFAM" id="SSF57501">
    <property type="entry name" value="Cystine-knot cytokines"/>
    <property type="match status" value="1"/>
</dbReference>
<dbReference type="PROSITE" id="PS00250">
    <property type="entry name" value="TGF_BETA_1"/>
    <property type="match status" value="1"/>
</dbReference>
<dbReference type="PROSITE" id="PS51362">
    <property type="entry name" value="TGF_BETA_2"/>
    <property type="match status" value="1"/>
</dbReference>
<reference key="1">
    <citation type="journal article" date="1992" name="J. Biol. Chem.">
        <title>Osteogenic protein-2. A new member of the transforming growth factor-beta superfamily expressed early in embryogenesis.</title>
        <authorList>
            <person name="Oezkaynak E."/>
            <person name="Schnegelsberg P.N.J."/>
            <person name="Jin D.F."/>
            <person name="Clifford G.M."/>
            <person name="Warren F.D."/>
            <person name="Drier E.A."/>
            <person name="Oppermann H."/>
        </authorList>
    </citation>
    <scope>NUCLEOTIDE SEQUENCE [MRNA] (ISOFORM 1)</scope>
    <source>
        <tissue>Embryo</tissue>
    </source>
</reference>
<reference key="2">
    <citation type="journal article" date="2009" name="PLoS Biol.">
        <title>Lineage-specific biology revealed by a finished genome assembly of the mouse.</title>
        <authorList>
            <person name="Church D.M."/>
            <person name="Goodstadt L."/>
            <person name="Hillier L.W."/>
            <person name="Zody M.C."/>
            <person name="Goldstein S."/>
            <person name="She X."/>
            <person name="Bult C.J."/>
            <person name="Agarwala R."/>
            <person name="Cherry J.L."/>
            <person name="DiCuccio M."/>
            <person name="Hlavina W."/>
            <person name="Kapustin Y."/>
            <person name="Meric P."/>
            <person name="Maglott D."/>
            <person name="Birtle Z."/>
            <person name="Marques A.C."/>
            <person name="Graves T."/>
            <person name="Zhou S."/>
            <person name="Teague B."/>
            <person name="Potamousis K."/>
            <person name="Churas C."/>
            <person name="Place M."/>
            <person name="Herschleb J."/>
            <person name="Runnheim R."/>
            <person name="Forrest D."/>
            <person name="Amos-Landgraf J."/>
            <person name="Schwartz D.C."/>
            <person name="Cheng Z."/>
            <person name="Lindblad-Toh K."/>
            <person name="Eichler E.E."/>
            <person name="Ponting C.P."/>
        </authorList>
    </citation>
    <scope>NUCLEOTIDE SEQUENCE [LARGE SCALE GENOMIC DNA]</scope>
    <source>
        <strain>C57BL/6J</strain>
    </source>
</reference>
<reference key="3">
    <citation type="submission" date="2005-09" db="EMBL/GenBank/DDBJ databases">
        <authorList>
            <person name="Mural R.J."/>
            <person name="Adams M.D."/>
            <person name="Myers E.W."/>
            <person name="Smith H.O."/>
            <person name="Venter J.C."/>
        </authorList>
    </citation>
    <scope>NUCLEOTIDE SEQUENCE [LARGE SCALE GENOMIC DNA]</scope>
</reference>
<reference key="4">
    <citation type="journal article" date="2004" name="Genome Res.">
        <title>The status, quality, and expansion of the NIH full-length cDNA project: the Mammalian Gene Collection (MGC).</title>
        <authorList>
            <consortium name="The MGC Project Team"/>
        </authorList>
    </citation>
    <scope>NUCLEOTIDE SEQUENCE [LARGE SCALE MRNA] (ISOFORM 2)</scope>
    <source>
        <strain>C57BL/6J</strain>
        <tissue>Embryo</tissue>
    </source>
</reference>
<reference key="5">
    <citation type="journal article" date="1996" name="Mech. Dev.">
        <title>Evidence that mouse Bmp8a (Op2) and Bmp8b are duplicated genes that play a role in spermatogenesis and placental development.</title>
        <authorList>
            <person name="Zhao G.Q."/>
            <person name="Hogan B.L."/>
        </authorList>
    </citation>
    <scope>TISSUE SPECIFICITY</scope>
    <scope>DEVELOPMENTAL STAGE</scope>
</reference>
<reference key="6">
    <citation type="journal article" date="1998" name="Development">
        <title>Bone morphogenetic protein 8A plays a role in the maintenance of spermatogenesis and the integrity of the epididymis.</title>
        <authorList>
            <person name="Zhao G.Q."/>
            <person name="Liaw L."/>
            <person name="Hogan B.L."/>
        </authorList>
    </citation>
    <scope>FUNCTION</scope>
    <scope>DISRUPTION PHENOTYPE</scope>
</reference>
<reference key="7">
    <citation type="journal article" date="2003" name="J. Bone Joint Surg.">
        <title>Osteogenic activity of the fourteen types of human bone morphogenetic proteins (BMPs).</title>
        <authorList>
            <person name="Cheng H."/>
            <person name="Jiang W."/>
            <person name="Phillips F.M."/>
            <person name="Haydon R.C."/>
            <person name="Peng Y."/>
            <person name="Zhou L."/>
            <person name="Luu H.H."/>
            <person name="An N."/>
            <person name="Breyer B."/>
            <person name="Vanichakarn P."/>
            <person name="Szatkowski J.P."/>
            <person name="Park J.Y."/>
            <person name="He T.C."/>
        </authorList>
    </citation>
    <scope>FUNCTION</scope>
</reference>
<reference key="8">
    <citation type="journal article" date="2011" name="Bone">
        <title>The protective role of bone morphogenetic protein-8 in the glucocorticoid-induced apoptosis on bone cells.</title>
        <authorList>
            <person name="Kosa J.P."/>
            <person name="Kis A."/>
            <person name="Bacsi K."/>
            <person name="Balla B."/>
            <person name="Nagy Z."/>
            <person name="Takacs I."/>
            <person name="Speer G."/>
            <person name="Lakatos P."/>
        </authorList>
    </citation>
    <scope>INDUCTION</scope>
</reference>
<reference key="9">
    <citation type="journal article" date="2017" name="Sci. Signal.">
        <title>BMP8A sustains spermatogenesis by activating both SMAD1/5/8 and SMAD2/3 in spermatogonia.</title>
        <authorList>
            <person name="Wu F.J."/>
            <person name="Lin T.Y."/>
            <person name="Sung L.Y."/>
            <person name="Chang W.F."/>
            <person name="Wu P.C."/>
            <person name="Luo C.W."/>
        </authorList>
    </citation>
    <scope>FUNCTION</scope>
    <scope>TISSUE SPECIFICITY</scope>
</reference>